<accession>P0A287</accession>
<accession>P13654</accession>
<proteinExistence type="inferred from homology"/>
<reference key="1">
    <citation type="journal article" date="1989" name="J. Bacteriol.">
        <title>Cloning, genetic characterization, and nucleotide sequence of the hemA-prfA operon of Salmonella typhimurium.</title>
        <authorList>
            <person name="Elliott T."/>
        </authorList>
    </citation>
    <scope>NUCLEOTIDE SEQUENCE [GENOMIC DNA]</scope>
</reference>
<reference key="2">
    <citation type="journal article" date="2001" name="Nature">
        <title>Complete genome sequence of Salmonella enterica serovar Typhimurium LT2.</title>
        <authorList>
            <person name="McClelland M."/>
            <person name="Sanderson K.E."/>
            <person name="Spieth J."/>
            <person name="Clifton S.W."/>
            <person name="Latreille P."/>
            <person name="Courtney L."/>
            <person name="Porwollik S."/>
            <person name="Ali J."/>
            <person name="Dante M."/>
            <person name="Du F."/>
            <person name="Hou S."/>
            <person name="Layman D."/>
            <person name="Leonard S."/>
            <person name="Nguyen C."/>
            <person name="Scott K."/>
            <person name="Holmes A."/>
            <person name="Grewal N."/>
            <person name="Mulvaney E."/>
            <person name="Ryan E."/>
            <person name="Sun H."/>
            <person name="Florea L."/>
            <person name="Miller W."/>
            <person name="Stoneking T."/>
            <person name="Nhan M."/>
            <person name="Waterston R."/>
            <person name="Wilson R.K."/>
        </authorList>
    </citation>
    <scope>NUCLEOTIDE SEQUENCE [LARGE SCALE GENOMIC DNA]</scope>
    <source>
        <strain>LT2 / SGSC1412 / ATCC 700720</strain>
    </source>
</reference>
<sequence>MKPSIVAKLEALHERHEEVQALLGDAGIIADQDRFRALSREYAQLSDVSRCFTDWQQVQDDIETAQMMLDDPEMREMAQEELREAKEKSEQLEQQLQVLLLPKDPDDERNAFLEVRAGTGGDEAALFAGDLFRMYSRYAEARRWRVEIMSMSEGEHGGYKEIIAKISGDGVYGRLKFESGGHRVQRVPATESQGRIHTSACTVAVMPELPEAELPDINPADLRIDTFRSSGAGGQHVNTTDSAIRITHLPTGIVVECQDERSQHKNKAKALSVLGARIHAAETAKRQQAEASTRRNLLGSGDRSDRNRTYNFPQGRVTDHRINLTLYRLDETMEGKLDMLIEPIVQEHQADLLAALSEQE</sequence>
<organism>
    <name type="scientific">Salmonella typhimurium (strain LT2 / SGSC1412 / ATCC 700720)</name>
    <dbReference type="NCBI Taxonomy" id="99287"/>
    <lineage>
        <taxon>Bacteria</taxon>
        <taxon>Pseudomonadati</taxon>
        <taxon>Pseudomonadota</taxon>
        <taxon>Gammaproteobacteria</taxon>
        <taxon>Enterobacterales</taxon>
        <taxon>Enterobacteriaceae</taxon>
        <taxon>Salmonella</taxon>
    </lineage>
</organism>
<comment type="function">
    <text evidence="1">Peptide chain release factor 1 directs the termination of translation in response to the peptide chain termination codons UAG and UAA.</text>
</comment>
<comment type="subcellular location">
    <subcellularLocation>
        <location evidence="1">Cytoplasm</location>
    </subcellularLocation>
</comment>
<comment type="PTM">
    <text evidence="1">Methylated by PrmC. Methylation increases the termination efficiency of RF1 (By similarity).</text>
</comment>
<comment type="similarity">
    <text evidence="3">Belongs to the prokaryotic/mitochondrial release factor family.</text>
</comment>
<dbReference type="EMBL" id="J04243">
    <property type="protein sequence ID" value="AAA88611.1"/>
    <property type="molecule type" value="Genomic_DNA"/>
</dbReference>
<dbReference type="EMBL" id="AE006468">
    <property type="protein sequence ID" value="AAL20691.1"/>
    <property type="molecule type" value="Genomic_DNA"/>
</dbReference>
<dbReference type="PIR" id="B32890">
    <property type="entry name" value="B32890"/>
</dbReference>
<dbReference type="RefSeq" id="NP_460732.1">
    <property type="nucleotide sequence ID" value="NC_003197.2"/>
</dbReference>
<dbReference type="RefSeq" id="WP_000804703.1">
    <property type="nucleotide sequence ID" value="NC_003197.2"/>
</dbReference>
<dbReference type="SMR" id="P0A287"/>
<dbReference type="STRING" id="99287.STM1776"/>
<dbReference type="PaxDb" id="99287-STM1776"/>
<dbReference type="GeneID" id="1253295"/>
<dbReference type="KEGG" id="stm:STM1776"/>
<dbReference type="PATRIC" id="fig|99287.12.peg.1871"/>
<dbReference type="HOGENOM" id="CLU_036856_0_1_6"/>
<dbReference type="OMA" id="DHRVGFK"/>
<dbReference type="PhylomeDB" id="P0A287"/>
<dbReference type="BioCyc" id="SENT99287:STM1776-MONOMER"/>
<dbReference type="Proteomes" id="UP000001014">
    <property type="component" value="Chromosome"/>
</dbReference>
<dbReference type="GO" id="GO:0005737">
    <property type="term" value="C:cytoplasm"/>
    <property type="evidence" value="ECO:0007669"/>
    <property type="project" value="UniProtKB-SubCell"/>
</dbReference>
<dbReference type="GO" id="GO:0016149">
    <property type="term" value="F:translation release factor activity, codon specific"/>
    <property type="evidence" value="ECO:0007669"/>
    <property type="project" value="UniProtKB-UniRule"/>
</dbReference>
<dbReference type="FunFam" id="3.30.160.20:FF:000004">
    <property type="entry name" value="Peptide chain release factor 1"/>
    <property type="match status" value="1"/>
</dbReference>
<dbReference type="FunFam" id="3.30.70.1660:FF:000002">
    <property type="entry name" value="Peptide chain release factor 1"/>
    <property type="match status" value="1"/>
</dbReference>
<dbReference type="FunFam" id="3.30.70.1660:FF:000004">
    <property type="entry name" value="Peptide chain release factor 1"/>
    <property type="match status" value="1"/>
</dbReference>
<dbReference type="Gene3D" id="3.30.160.20">
    <property type="match status" value="1"/>
</dbReference>
<dbReference type="Gene3D" id="3.30.70.1660">
    <property type="match status" value="2"/>
</dbReference>
<dbReference type="Gene3D" id="6.10.140.1950">
    <property type="match status" value="1"/>
</dbReference>
<dbReference type="HAMAP" id="MF_00093">
    <property type="entry name" value="Rel_fac_1"/>
    <property type="match status" value="1"/>
</dbReference>
<dbReference type="InterPro" id="IPR005139">
    <property type="entry name" value="PCRF"/>
</dbReference>
<dbReference type="InterPro" id="IPR000352">
    <property type="entry name" value="Pep_chain_release_fac_I"/>
</dbReference>
<dbReference type="InterPro" id="IPR045853">
    <property type="entry name" value="Pep_chain_release_fac_I_sf"/>
</dbReference>
<dbReference type="InterPro" id="IPR050057">
    <property type="entry name" value="Prokaryotic/Mito_RF"/>
</dbReference>
<dbReference type="InterPro" id="IPR004373">
    <property type="entry name" value="RF-1"/>
</dbReference>
<dbReference type="NCBIfam" id="TIGR00019">
    <property type="entry name" value="prfA"/>
    <property type="match status" value="1"/>
</dbReference>
<dbReference type="NCBIfam" id="NF001859">
    <property type="entry name" value="PRK00591.1"/>
    <property type="match status" value="1"/>
</dbReference>
<dbReference type="PANTHER" id="PTHR43804">
    <property type="entry name" value="LD18447P"/>
    <property type="match status" value="1"/>
</dbReference>
<dbReference type="PANTHER" id="PTHR43804:SF7">
    <property type="entry name" value="LD18447P"/>
    <property type="match status" value="1"/>
</dbReference>
<dbReference type="Pfam" id="PF03462">
    <property type="entry name" value="PCRF"/>
    <property type="match status" value="1"/>
</dbReference>
<dbReference type="Pfam" id="PF00472">
    <property type="entry name" value="RF-1"/>
    <property type="match status" value="1"/>
</dbReference>
<dbReference type="SMART" id="SM00937">
    <property type="entry name" value="PCRF"/>
    <property type="match status" value="1"/>
</dbReference>
<dbReference type="SUPFAM" id="SSF75620">
    <property type="entry name" value="Release factor"/>
    <property type="match status" value="1"/>
</dbReference>
<dbReference type="PROSITE" id="PS00745">
    <property type="entry name" value="RF_PROK_I"/>
    <property type="match status" value="1"/>
</dbReference>
<name>RF1_SALTY</name>
<feature type="chain" id="PRO_0000177734" description="Peptide chain release factor 1">
    <location>
        <begin position="1"/>
        <end position="360"/>
    </location>
</feature>
<feature type="region of interest" description="Disordered" evidence="2">
    <location>
        <begin position="284"/>
        <end position="313"/>
    </location>
</feature>
<feature type="modified residue" description="N5-methylglutamine" evidence="1">
    <location>
        <position position="235"/>
    </location>
</feature>
<keyword id="KW-0963">Cytoplasm</keyword>
<keyword id="KW-0488">Methylation</keyword>
<keyword id="KW-0648">Protein biosynthesis</keyword>
<keyword id="KW-1185">Reference proteome</keyword>
<gene>
    <name type="primary">prfA</name>
    <name type="ordered locus">STM1776</name>
</gene>
<protein>
    <recommendedName>
        <fullName>Peptide chain release factor 1</fullName>
        <shortName>RF-1</shortName>
    </recommendedName>
</protein>
<evidence type="ECO:0000250" key="1"/>
<evidence type="ECO:0000256" key="2">
    <source>
        <dbReference type="SAM" id="MobiDB-lite"/>
    </source>
</evidence>
<evidence type="ECO:0000305" key="3"/>